<comment type="function">
    <text evidence="1">Transcription factor which may be involved in developmental processes.</text>
</comment>
<comment type="subcellular location">
    <subcellularLocation>
        <location evidence="2">Nucleus</location>
    </subcellularLocation>
</comment>
<comment type="similarity">
    <text evidence="4">Belongs to the WUS homeobox family.</text>
</comment>
<proteinExistence type="evidence at transcript level"/>
<accession>Q8LR86</accession>
<accession>A0AAT0</accession>
<feature type="chain" id="PRO_0000308641" description="WUSCHEL-related homeobox 5">
    <location>
        <begin position="1"/>
        <end position="313"/>
    </location>
</feature>
<feature type="DNA-binding region" description="Homeobox; WUS-type" evidence="2">
    <location>
        <begin position="40"/>
        <end position="104"/>
    </location>
</feature>
<feature type="region of interest" description="Disordered" evidence="3">
    <location>
        <begin position="1"/>
        <end position="32"/>
    </location>
</feature>
<feature type="region of interest" description="Disordered" evidence="3">
    <location>
        <begin position="224"/>
        <end position="247"/>
    </location>
</feature>
<feature type="region of interest" description="Disordered" evidence="3">
    <location>
        <begin position="271"/>
        <end position="313"/>
    </location>
</feature>
<feature type="compositionally biased region" description="Gly residues" evidence="3">
    <location>
        <begin position="8"/>
        <end position="17"/>
    </location>
</feature>
<feature type="compositionally biased region" description="Pro residues" evidence="3">
    <location>
        <begin position="22"/>
        <end position="31"/>
    </location>
</feature>
<feature type="compositionally biased region" description="Low complexity" evidence="3">
    <location>
        <begin position="271"/>
        <end position="301"/>
    </location>
</feature>
<dbReference type="EMBL" id="AP003241">
    <property type="protein sequence ID" value="BAB93218.1"/>
    <property type="molecule type" value="Genomic_DNA"/>
</dbReference>
<dbReference type="EMBL" id="AP008207">
    <property type="protein sequence ID" value="BAF06673.1"/>
    <property type="molecule type" value="Genomic_DNA"/>
</dbReference>
<dbReference type="EMBL" id="AP014957">
    <property type="status" value="NOT_ANNOTATED_CDS"/>
    <property type="molecule type" value="Genomic_DNA"/>
</dbReference>
<dbReference type="EMBL" id="AM234749">
    <property type="protein sequence ID" value="CAJ84141.1"/>
    <property type="molecule type" value="mRNA"/>
</dbReference>
<dbReference type="RefSeq" id="XP_015644226.1">
    <property type="nucleotide sequence ID" value="XM_015788740.1"/>
</dbReference>
<dbReference type="SMR" id="Q8LR86"/>
<dbReference type="FunCoup" id="Q8LR86">
    <property type="interactions" value="115"/>
</dbReference>
<dbReference type="STRING" id="39947.Q8LR86"/>
<dbReference type="PaxDb" id="39947-Q8LR86"/>
<dbReference type="KEGG" id="dosa:Os01g0840300"/>
<dbReference type="eggNOG" id="ENOG502RZ2B">
    <property type="taxonomic scope" value="Eukaryota"/>
</dbReference>
<dbReference type="HOGENOM" id="CLU_191894_0_0_1"/>
<dbReference type="InParanoid" id="Q8LR86"/>
<dbReference type="OrthoDB" id="1896656at2759"/>
<dbReference type="Proteomes" id="UP000000763">
    <property type="component" value="Chromosome 1"/>
</dbReference>
<dbReference type="Proteomes" id="UP000059680">
    <property type="component" value="Chromosome 1"/>
</dbReference>
<dbReference type="GO" id="GO:0005634">
    <property type="term" value="C:nucleus"/>
    <property type="evidence" value="ECO:0007669"/>
    <property type="project" value="UniProtKB-SubCell"/>
</dbReference>
<dbReference type="GO" id="GO:0003677">
    <property type="term" value="F:DNA binding"/>
    <property type="evidence" value="ECO:0007669"/>
    <property type="project" value="UniProtKB-KW"/>
</dbReference>
<dbReference type="GO" id="GO:0003700">
    <property type="term" value="F:DNA-binding transcription factor activity"/>
    <property type="evidence" value="ECO:0007669"/>
    <property type="project" value="InterPro"/>
</dbReference>
<dbReference type="GO" id="GO:0099402">
    <property type="term" value="P:plant organ development"/>
    <property type="evidence" value="ECO:0007669"/>
    <property type="project" value="InterPro"/>
</dbReference>
<dbReference type="CDD" id="cd00086">
    <property type="entry name" value="homeodomain"/>
    <property type="match status" value="1"/>
</dbReference>
<dbReference type="FunFam" id="1.10.10.60:FF:000146">
    <property type="entry name" value="WUSCHEL-related homeobox 4"/>
    <property type="match status" value="1"/>
</dbReference>
<dbReference type="Gene3D" id="1.10.10.60">
    <property type="entry name" value="Homeodomain-like"/>
    <property type="match status" value="1"/>
</dbReference>
<dbReference type="InterPro" id="IPR001356">
    <property type="entry name" value="HD"/>
</dbReference>
<dbReference type="InterPro" id="IPR009057">
    <property type="entry name" value="Homeodomain-like_sf"/>
</dbReference>
<dbReference type="InterPro" id="IPR044555">
    <property type="entry name" value="WUSCHEL-like"/>
</dbReference>
<dbReference type="PANTHER" id="PTHR45940">
    <property type="entry name" value="WUSCHEL-RELATED HOMEOBOX 1-RELATED"/>
    <property type="match status" value="1"/>
</dbReference>
<dbReference type="PANTHER" id="PTHR45940:SF6">
    <property type="entry name" value="WUSCHEL-RELATED HOMEOBOX 2"/>
    <property type="match status" value="1"/>
</dbReference>
<dbReference type="Pfam" id="PF00046">
    <property type="entry name" value="Homeodomain"/>
    <property type="match status" value="1"/>
</dbReference>
<dbReference type="SMART" id="SM00389">
    <property type="entry name" value="HOX"/>
    <property type="match status" value="1"/>
</dbReference>
<dbReference type="SUPFAM" id="SSF46689">
    <property type="entry name" value="Homeodomain-like"/>
    <property type="match status" value="1"/>
</dbReference>
<dbReference type="PROSITE" id="PS50071">
    <property type="entry name" value="HOMEOBOX_2"/>
    <property type="match status" value="1"/>
</dbReference>
<keyword id="KW-0217">Developmental protein</keyword>
<keyword id="KW-0238">DNA-binding</keyword>
<keyword id="KW-0371">Homeobox</keyword>
<keyword id="KW-0539">Nucleus</keyword>
<keyword id="KW-1185">Reference proteome</keyword>
<keyword id="KW-0804">Transcription</keyword>
<keyword id="KW-0805">Transcription regulation</keyword>
<name>WOX5_ORYSJ</name>
<organism>
    <name type="scientific">Oryza sativa subsp. japonica</name>
    <name type="common">Rice</name>
    <dbReference type="NCBI Taxonomy" id="39947"/>
    <lineage>
        <taxon>Eukaryota</taxon>
        <taxon>Viridiplantae</taxon>
        <taxon>Streptophyta</taxon>
        <taxon>Embryophyta</taxon>
        <taxon>Tracheophyta</taxon>
        <taxon>Spermatophyta</taxon>
        <taxon>Magnoliopsida</taxon>
        <taxon>Liliopsida</taxon>
        <taxon>Poales</taxon>
        <taxon>Poaceae</taxon>
        <taxon>BOP clade</taxon>
        <taxon>Oryzoideae</taxon>
        <taxon>Oryzeae</taxon>
        <taxon>Oryzinae</taxon>
        <taxon>Oryza</taxon>
        <taxon>Oryza sativa</taxon>
    </lineage>
</organism>
<reference key="1">
    <citation type="journal article" date="2002" name="Nature">
        <title>The genome sequence and structure of rice chromosome 1.</title>
        <authorList>
            <person name="Sasaki T."/>
            <person name="Matsumoto T."/>
            <person name="Yamamoto K."/>
            <person name="Sakata K."/>
            <person name="Baba T."/>
            <person name="Katayose Y."/>
            <person name="Wu J."/>
            <person name="Niimura Y."/>
            <person name="Cheng Z."/>
            <person name="Nagamura Y."/>
            <person name="Antonio B.A."/>
            <person name="Kanamori H."/>
            <person name="Hosokawa S."/>
            <person name="Masukawa M."/>
            <person name="Arikawa K."/>
            <person name="Chiden Y."/>
            <person name="Hayashi M."/>
            <person name="Okamoto M."/>
            <person name="Ando T."/>
            <person name="Aoki H."/>
            <person name="Arita K."/>
            <person name="Hamada M."/>
            <person name="Harada C."/>
            <person name="Hijishita S."/>
            <person name="Honda M."/>
            <person name="Ichikawa Y."/>
            <person name="Idonuma A."/>
            <person name="Iijima M."/>
            <person name="Ikeda M."/>
            <person name="Ikeno M."/>
            <person name="Ito S."/>
            <person name="Ito T."/>
            <person name="Ito Y."/>
            <person name="Ito Y."/>
            <person name="Iwabuchi A."/>
            <person name="Kamiya K."/>
            <person name="Karasawa W."/>
            <person name="Katagiri S."/>
            <person name="Kikuta A."/>
            <person name="Kobayashi N."/>
            <person name="Kono I."/>
            <person name="Machita K."/>
            <person name="Maehara T."/>
            <person name="Mizuno H."/>
            <person name="Mizubayashi T."/>
            <person name="Mukai Y."/>
            <person name="Nagasaki H."/>
            <person name="Nakashima M."/>
            <person name="Nakama Y."/>
            <person name="Nakamichi Y."/>
            <person name="Nakamura M."/>
            <person name="Namiki N."/>
            <person name="Negishi M."/>
            <person name="Ohta I."/>
            <person name="Ono N."/>
            <person name="Saji S."/>
            <person name="Sakai K."/>
            <person name="Shibata M."/>
            <person name="Shimokawa T."/>
            <person name="Shomura A."/>
            <person name="Song J."/>
            <person name="Takazaki Y."/>
            <person name="Terasawa K."/>
            <person name="Tsuji K."/>
            <person name="Waki K."/>
            <person name="Yamagata H."/>
            <person name="Yamane H."/>
            <person name="Yoshiki S."/>
            <person name="Yoshihara R."/>
            <person name="Yukawa K."/>
            <person name="Zhong H."/>
            <person name="Iwama H."/>
            <person name="Endo T."/>
            <person name="Ito H."/>
            <person name="Hahn J.H."/>
            <person name="Kim H.-I."/>
            <person name="Eun M.-Y."/>
            <person name="Yano M."/>
            <person name="Jiang J."/>
            <person name="Gojobori T."/>
        </authorList>
    </citation>
    <scope>NUCLEOTIDE SEQUENCE [LARGE SCALE GENOMIC DNA]</scope>
    <source>
        <strain>cv. Nipponbare</strain>
    </source>
</reference>
<reference key="2">
    <citation type="journal article" date="2005" name="Nature">
        <title>The map-based sequence of the rice genome.</title>
        <authorList>
            <consortium name="International rice genome sequencing project (IRGSP)"/>
        </authorList>
    </citation>
    <scope>NUCLEOTIDE SEQUENCE [LARGE SCALE GENOMIC DNA]</scope>
    <source>
        <strain>cv. Nipponbare</strain>
    </source>
</reference>
<reference key="3">
    <citation type="journal article" date="2008" name="Nucleic Acids Res.">
        <title>The rice annotation project database (RAP-DB): 2008 update.</title>
        <authorList>
            <consortium name="The rice annotation project (RAP)"/>
        </authorList>
    </citation>
    <scope>GENOME REANNOTATION</scope>
    <source>
        <strain>cv. Nipponbare</strain>
    </source>
</reference>
<reference key="4">
    <citation type="journal article" date="2013" name="Rice">
        <title>Improvement of the Oryza sativa Nipponbare reference genome using next generation sequence and optical map data.</title>
        <authorList>
            <person name="Kawahara Y."/>
            <person name="de la Bastide M."/>
            <person name="Hamilton J.P."/>
            <person name="Kanamori H."/>
            <person name="McCombie W.R."/>
            <person name="Ouyang S."/>
            <person name="Schwartz D.C."/>
            <person name="Tanaka T."/>
            <person name="Wu J."/>
            <person name="Zhou S."/>
            <person name="Childs K.L."/>
            <person name="Davidson R.M."/>
            <person name="Lin H."/>
            <person name="Quesada-Ocampo L."/>
            <person name="Vaillancourt B."/>
            <person name="Sakai H."/>
            <person name="Lee S.S."/>
            <person name="Kim J."/>
            <person name="Numa H."/>
            <person name="Itoh T."/>
            <person name="Buell C.R."/>
            <person name="Matsumoto T."/>
        </authorList>
    </citation>
    <scope>GENOME REANNOTATION</scope>
    <source>
        <strain>cv. Nipponbare</strain>
    </source>
</reference>
<reference key="5">
    <citation type="journal article" date="2006" name="Mol. Biol. Evol.">
        <title>The shoot stem cell niche in angiosperms: expression patterns of WUS orthologues in rice and maize imply major modifications in the course of mono- and dicot evolution.</title>
        <authorList>
            <person name="Nardmann J."/>
            <person name="Werr W."/>
        </authorList>
    </citation>
    <scope>NUCLEOTIDE SEQUENCE [MRNA] OF 40-104</scope>
</reference>
<reference key="6">
    <citation type="journal article" date="2007" name="Plant Physiol.">
        <title>A WUSCHEL-LIKE HOMEOBOX gene represses a YABBY gene expression required for rice leaf development.</title>
        <authorList>
            <person name="Dai M."/>
            <person name="Hu Y."/>
            <person name="Zhao Y."/>
            <person name="Liu H."/>
            <person name="Zhou D.-X."/>
        </authorList>
    </citation>
    <scope>NOMENCLATURE</scope>
</reference>
<protein>
    <recommendedName>
        <fullName>WUSCHEL-related homeobox 5</fullName>
    </recommendedName>
    <alternativeName>
        <fullName>OsWOX5</fullName>
    </alternativeName>
    <alternativeName>
        <fullName>Protein WOX2</fullName>
    </alternativeName>
</protein>
<gene>
    <name type="primary">WOX5</name>
    <name type="ordered locus">Os01g0840300</name>
    <name type="ordered locus">LOC_Os01g62310</name>
    <name type="ORF">P0408C03.23</name>
</gene>
<evidence type="ECO:0000250" key="1"/>
<evidence type="ECO:0000255" key="2">
    <source>
        <dbReference type="PROSITE-ProRule" id="PRU00108"/>
    </source>
</evidence>
<evidence type="ECO:0000256" key="3">
    <source>
        <dbReference type="SAM" id="MobiDB-lite"/>
    </source>
</evidence>
<evidence type="ECO:0000305" key="4"/>
<sequence length="313" mass="33206">METTTTTLGGGGGGRAGGFSDPPSPLSPPLSPASAAAAALANARWTPTKEQIAVLEGLYRQGLRTPTAEQIQQITARLREHGHIEGKNVFYWFQNHKARQRQKQKQQSFDYFSKLFRRPPPLPVLHRPLARPFPLAMAPTAMPPPPPPPATTTTAACNAGGVMFRTPSFMPVATNNASYYPQQQTPLLYPGMEVCPHDKSTAQPPATTTMYLQAPPSSAHLAAAAGRGAAEAEGHGRRGGGAGGRETLQLFPLQPTFVLPDHKPLRAGSACAAVSPTTPSASASFSWESESSDSPSSEAPPFYDFFGVHSGGR</sequence>